<comment type="function">
    <text evidence="1">Adds poly(A) tail to the 3' end of many RNAs, which usually targets these RNAs for decay. Plays a significant role in the global control of gene expression, through influencing the rate of transcript degradation, and in the general RNA quality control.</text>
</comment>
<comment type="catalytic activity">
    <reaction evidence="1">
        <text>RNA(n) + ATP = RNA(n)-3'-adenine ribonucleotide + diphosphate</text>
        <dbReference type="Rhea" id="RHEA:11332"/>
        <dbReference type="Rhea" id="RHEA-COMP:14527"/>
        <dbReference type="Rhea" id="RHEA-COMP:17347"/>
        <dbReference type="ChEBI" id="CHEBI:30616"/>
        <dbReference type="ChEBI" id="CHEBI:33019"/>
        <dbReference type="ChEBI" id="CHEBI:140395"/>
        <dbReference type="ChEBI" id="CHEBI:173115"/>
        <dbReference type="EC" id="2.7.7.19"/>
    </reaction>
</comment>
<comment type="similarity">
    <text evidence="1">Belongs to the tRNA nucleotidyltransferase/poly(A) polymerase family.</text>
</comment>
<reference key="1">
    <citation type="journal article" date="1995" name="Science">
        <title>Whole-genome random sequencing and assembly of Haemophilus influenzae Rd.</title>
        <authorList>
            <person name="Fleischmann R.D."/>
            <person name="Adams M.D."/>
            <person name="White O."/>
            <person name="Clayton R.A."/>
            <person name="Kirkness E.F."/>
            <person name="Kerlavage A.R."/>
            <person name="Bult C.J."/>
            <person name="Tomb J.-F."/>
            <person name="Dougherty B.A."/>
            <person name="Merrick J.M."/>
            <person name="McKenney K."/>
            <person name="Sutton G.G."/>
            <person name="FitzHugh W."/>
            <person name="Fields C.A."/>
            <person name="Gocayne J.D."/>
            <person name="Scott J.D."/>
            <person name="Shirley R."/>
            <person name="Liu L.-I."/>
            <person name="Glodek A."/>
            <person name="Kelley J.M."/>
            <person name="Weidman J.F."/>
            <person name="Phillips C.A."/>
            <person name="Spriggs T."/>
            <person name="Hedblom E."/>
            <person name="Cotton M.D."/>
            <person name="Utterback T.R."/>
            <person name="Hanna M.C."/>
            <person name="Nguyen D.T."/>
            <person name="Saudek D.M."/>
            <person name="Brandon R.C."/>
            <person name="Fine L.D."/>
            <person name="Fritchman J.L."/>
            <person name="Fuhrmann J.L."/>
            <person name="Geoghagen N.S.M."/>
            <person name="Gnehm C.L."/>
            <person name="McDonald L.A."/>
            <person name="Small K.V."/>
            <person name="Fraser C.M."/>
            <person name="Smith H.O."/>
            <person name="Venter J.C."/>
        </authorList>
    </citation>
    <scope>NUCLEOTIDE SEQUENCE [LARGE SCALE GENOMIC DNA]</scope>
    <source>
        <strain>ATCC 51907 / DSM 11121 / KW20 / Rd</strain>
    </source>
</reference>
<keyword id="KW-0067">ATP-binding</keyword>
<keyword id="KW-0507">mRNA processing</keyword>
<keyword id="KW-0547">Nucleotide-binding</keyword>
<keyword id="KW-1185">Reference proteome</keyword>
<keyword id="KW-0694">RNA-binding</keyword>
<keyword id="KW-0804">Transcription</keyword>
<keyword id="KW-0808">Transferase</keyword>
<evidence type="ECO:0000255" key="1">
    <source>
        <dbReference type="HAMAP-Rule" id="MF_00957"/>
    </source>
</evidence>
<evidence type="ECO:0000256" key="2">
    <source>
        <dbReference type="SAM" id="MobiDB-lite"/>
    </source>
</evidence>
<gene>
    <name evidence="1" type="primary">pcnB</name>
    <name type="ordered locus">HI_0063</name>
</gene>
<sequence>MPKARAKKSEQTRRYDKNVIKAAQFDISPRDFSRNALNVVEKLQRQGFEAYIVGGCIRDLLLGKKPKDFDVATNARPEQIQNIFQRQCRLVGRRFRLAHIMFGRDIIEVATFRANHSDARNENQAKQSNEGMLLRDNVYGTIEQDAARRDFTVNALYYNPQDNTLRDYFEGIKDLKAGKLRLIGDPVTRYQEDPVRMLRSIRFMAKLDMFLEKPSEQPIRELAPLLKNIPPARLFDESLKLLQAGQGVKTYRLLRQYGLFEQLFPALSAYFTEKEDSFAERMIVTALTSTDERVADKLRINPAFLFAAFFWYPLREKVEILKNEGGLNNHDAYALAGNEVLDLFCRALAAPRRHTAVIRDIWFLQLQLLKRTGSAPMRTMEHPKFRAGFDLLAMRAEIEGGETIELAKWWHEYQFSNGEQREQLIQEQQRLHPKPKKKYYRPRRRKTTCSAE</sequence>
<dbReference type="EC" id="2.7.7.19" evidence="1"/>
<dbReference type="EMBL" id="L42023">
    <property type="protein sequence ID" value="AAC21741.1"/>
    <property type="molecule type" value="Genomic_DNA"/>
</dbReference>
<dbReference type="PIR" id="B64046">
    <property type="entry name" value="B64046"/>
</dbReference>
<dbReference type="RefSeq" id="NP_438236.1">
    <property type="nucleotide sequence ID" value="NC_000907.1"/>
</dbReference>
<dbReference type="SMR" id="P44439"/>
<dbReference type="STRING" id="71421.HI_0063"/>
<dbReference type="EnsemblBacteria" id="AAC21741">
    <property type="protein sequence ID" value="AAC21741"/>
    <property type="gene ID" value="HI_0063"/>
</dbReference>
<dbReference type="KEGG" id="hin:HI_0063"/>
<dbReference type="PATRIC" id="fig|71421.8.peg.64"/>
<dbReference type="eggNOG" id="COG0617">
    <property type="taxonomic scope" value="Bacteria"/>
</dbReference>
<dbReference type="HOGENOM" id="CLU_015961_0_0_6"/>
<dbReference type="OrthoDB" id="9805698at2"/>
<dbReference type="PhylomeDB" id="P44439"/>
<dbReference type="BioCyc" id="HINF71421:G1GJ1-64-MONOMER"/>
<dbReference type="Proteomes" id="UP000000579">
    <property type="component" value="Chromosome"/>
</dbReference>
<dbReference type="GO" id="GO:0005524">
    <property type="term" value="F:ATP binding"/>
    <property type="evidence" value="ECO:0007669"/>
    <property type="project" value="UniProtKB-UniRule"/>
</dbReference>
<dbReference type="GO" id="GO:1990817">
    <property type="term" value="F:poly(A) RNA polymerase activity"/>
    <property type="evidence" value="ECO:0007669"/>
    <property type="project" value="UniProtKB-UniRule"/>
</dbReference>
<dbReference type="GO" id="GO:0003723">
    <property type="term" value="F:RNA binding"/>
    <property type="evidence" value="ECO:0007669"/>
    <property type="project" value="UniProtKB-UniRule"/>
</dbReference>
<dbReference type="GO" id="GO:0006397">
    <property type="term" value="P:mRNA processing"/>
    <property type="evidence" value="ECO:0007669"/>
    <property type="project" value="UniProtKB-KW"/>
</dbReference>
<dbReference type="GO" id="GO:0043633">
    <property type="term" value="P:polyadenylation-dependent RNA catabolic process"/>
    <property type="evidence" value="ECO:0007669"/>
    <property type="project" value="InterPro"/>
</dbReference>
<dbReference type="CDD" id="cd05398">
    <property type="entry name" value="NT_ClassII-CCAase"/>
    <property type="match status" value="1"/>
</dbReference>
<dbReference type="FunFam" id="3.30.460.10:FF:000035">
    <property type="entry name" value="Poly(A) polymerase I"/>
    <property type="match status" value="1"/>
</dbReference>
<dbReference type="Gene3D" id="3.30.460.10">
    <property type="entry name" value="Beta Polymerase, domain 2"/>
    <property type="match status" value="1"/>
</dbReference>
<dbReference type="Gene3D" id="1.10.3090.10">
    <property type="entry name" value="cca-adding enzyme, domain 2"/>
    <property type="match status" value="1"/>
</dbReference>
<dbReference type="HAMAP" id="MF_00957">
    <property type="entry name" value="PolyA_pol"/>
    <property type="match status" value="1"/>
</dbReference>
<dbReference type="InterPro" id="IPR043519">
    <property type="entry name" value="NT_sf"/>
</dbReference>
<dbReference type="InterPro" id="IPR002646">
    <property type="entry name" value="PolA_pol_head_dom"/>
</dbReference>
<dbReference type="InterPro" id="IPR010206">
    <property type="entry name" value="PolA_pol_I"/>
</dbReference>
<dbReference type="InterPro" id="IPR025866">
    <property type="entry name" value="PolyA_pol_arg_C_dom"/>
</dbReference>
<dbReference type="InterPro" id="IPR032828">
    <property type="entry name" value="PolyA_RNA-bd"/>
</dbReference>
<dbReference type="InterPro" id="IPR052191">
    <property type="entry name" value="tRNA_ntf/polyA_polymerase_I"/>
</dbReference>
<dbReference type="NCBIfam" id="TIGR01942">
    <property type="entry name" value="pcnB"/>
    <property type="match status" value="1"/>
</dbReference>
<dbReference type="PANTHER" id="PTHR43051">
    <property type="entry name" value="POLYNUCLEOTIDE ADENYLYLTRANSFERASE FAMILY PROTEIN"/>
    <property type="match status" value="1"/>
</dbReference>
<dbReference type="PANTHER" id="PTHR43051:SF1">
    <property type="entry name" value="POLYNUCLEOTIDE ADENYLYLTRANSFERASE FAMILY PROTEIN"/>
    <property type="match status" value="1"/>
</dbReference>
<dbReference type="Pfam" id="PF01743">
    <property type="entry name" value="PolyA_pol"/>
    <property type="match status" value="1"/>
</dbReference>
<dbReference type="Pfam" id="PF12626">
    <property type="entry name" value="PolyA_pol_arg_C"/>
    <property type="match status" value="1"/>
</dbReference>
<dbReference type="Pfam" id="PF12627">
    <property type="entry name" value="PolyA_pol_RNAbd"/>
    <property type="match status" value="1"/>
</dbReference>
<dbReference type="SUPFAM" id="SSF81301">
    <property type="entry name" value="Nucleotidyltransferase"/>
    <property type="match status" value="1"/>
</dbReference>
<dbReference type="SUPFAM" id="SSF81891">
    <property type="entry name" value="Poly A polymerase C-terminal region-like"/>
    <property type="match status" value="1"/>
</dbReference>
<protein>
    <recommendedName>
        <fullName evidence="1">Poly(A) polymerase I</fullName>
        <shortName evidence="1">PAP I</shortName>
        <ecNumber evidence="1">2.7.7.19</ecNumber>
    </recommendedName>
</protein>
<name>PCNB_HAEIN</name>
<organism>
    <name type="scientific">Haemophilus influenzae (strain ATCC 51907 / DSM 11121 / KW20 / Rd)</name>
    <dbReference type="NCBI Taxonomy" id="71421"/>
    <lineage>
        <taxon>Bacteria</taxon>
        <taxon>Pseudomonadati</taxon>
        <taxon>Pseudomonadota</taxon>
        <taxon>Gammaproteobacteria</taxon>
        <taxon>Pasteurellales</taxon>
        <taxon>Pasteurellaceae</taxon>
        <taxon>Haemophilus</taxon>
    </lineage>
</organism>
<proteinExistence type="inferred from homology"/>
<feature type="chain" id="PRO_0000139093" description="Poly(A) polymerase I">
    <location>
        <begin position="1"/>
        <end position="452"/>
    </location>
</feature>
<feature type="region of interest" description="Disordered" evidence="2">
    <location>
        <begin position="427"/>
        <end position="452"/>
    </location>
</feature>
<feature type="compositionally biased region" description="Basic residues" evidence="2">
    <location>
        <begin position="431"/>
        <end position="452"/>
    </location>
</feature>
<feature type="active site" evidence="1">
    <location>
        <position position="68"/>
    </location>
</feature>
<feature type="active site" evidence="1">
    <location>
        <position position="70"/>
    </location>
</feature>
<feature type="active site" evidence="1">
    <location>
        <position position="150"/>
    </location>
</feature>
<accession>P44439</accession>